<gene>
    <name evidence="1" type="primary">argC</name>
    <name type="ordered locus">SYNW1262</name>
</gene>
<protein>
    <recommendedName>
        <fullName evidence="1">N-acetyl-gamma-glutamyl-phosphate reductase</fullName>
        <shortName evidence="1">AGPR</shortName>
        <ecNumber evidence="1">1.2.1.38</ecNumber>
    </recommendedName>
    <alternativeName>
        <fullName evidence="1">N-acetyl-glutamate semialdehyde dehydrogenase</fullName>
        <shortName evidence="1">NAGSA dehydrogenase</shortName>
    </alternativeName>
</protein>
<sequence>MAGGGQGRVAVIGASGYGGLQTIRLLQDHPSLTVTFLGGERSAGRRWSSICSFLPLPEDPVVQSADAERIAAAADYAVLSLPNGLACQLAPELLQRGVRVVDLSADFRYRSLEQWSQVYAQEANRLSREDSELCQQAVYGLPEWHGPAIAEARLVAAPGCFPTASLLPLLPFLKQGLIDTDGIVIDAKTGTSGGGRVPKEAMLLAEASESIAPYGVIGHRHTSEIEQMAREVAGQDVRLQFTPHLVPMVRGLLSTVYARLRDPGLTAEDCTTVLEAVYRHHPCVSVLPVGTYPATKWARHTNRALVSVQVDTRTGQMILMSAIDNLIKGQAGQGVQCLNLMHGLPPETGLPLQSFYP</sequence>
<feature type="chain" id="PRO_0000112463" description="N-acetyl-gamma-glutamyl-phosphate reductase">
    <location>
        <begin position="1"/>
        <end position="357"/>
    </location>
</feature>
<feature type="active site" evidence="1">
    <location>
        <position position="160"/>
    </location>
</feature>
<evidence type="ECO:0000255" key="1">
    <source>
        <dbReference type="HAMAP-Rule" id="MF_00150"/>
    </source>
</evidence>
<comment type="function">
    <text evidence="1">Catalyzes the NADPH-dependent reduction of N-acetyl-5-glutamyl phosphate to yield N-acetyl-L-glutamate 5-semialdehyde.</text>
</comment>
<comment type="catalytic activity">
    <reaction evidence="1">
        <text>N-acetyl-L-glutamate 5-semialdehyde + phosphate + NADP(+) = N-acetyl-L-glutamyl 5-phosphate + NADPH + H(+)</text>
        <dbReference type="Rhea" id="RHEA:21588"/>
        <dbReference type="ChEBI" id="CHEBI:15378"/>
        <dbReference type="ChEBI" id="CHEBI:29123"/>
        <dbReference type="ChEBI" id="CHEBI:43474"/>
        <dbReference type="ChEBI" id="CHEBI:57783"/>
        <dbReference type="ChEBI" id="CHEBI:57936"/>
        <dbReference type="ChEBI" id="CHEBI:58349"/>
        <dbReference type="EC" id="1.2.1.38"/>
    </reaction>
</comment>
<comment type="pathway">
    <text evidence="1">Amino-acid biosynthesis; L-arginine biosynthesis; N(2)-acetyl-L-ornithine from L-glutamate: step 3/4.</text>
</comment>
<comment type="subcellular location">
    <subcellularLocation>
        <location evidence="1">Cytoplasm</location>
    </subcellularLocation>
</comment>
<comment type="similarity">
    <text evidence="1">Belongs to the NAGSA dehydrogenase family. Type 1 subfamily.</text>
</comment>
<reference key="1">
    <citation type="journal article" date="2003" name="Nature">
        <title>The genome of a motile marine Synechococcus.</title>
        <authorList>
            <person name="Palenik B."/>
            <person name="Brahamsha B."/>
            <person name="Larimer F.W."/>
            <person name="Land M.L."/>
            <person name="Hauser L."/>
            <person name="Chain P."/>
            <person name="Lamerdin J.E."/>
            <person name="Regala W."/>
            <person name="Allen E.E."/>
            <person name="McCarren J."/>
            <person name="Paulsen I.T."/>
            <person name="Dufresne A."/>
            <person name="Partensky F."/>
            <person name="Webb E.A."/>
            <person name="Waterbury J."/>
        </authorList>
    </citation>
    <scope>NUCLEOTIDE SEQUENCE [LARGE SCALE GENOMIC DNA]</scope>
    <source>
        <strain>WH8102</strain>
    </source>
</reference>
<organism>
    <name type="scientific">Parasynechococcus marenigrum (strain WH8102)</name>
    <dbReference type="NCBI Taxonomy" id="84588"/>
    <lineage>
        <taxon>Bacteria</taxon>
        <taxon>Bacillati</taxon>
        <taxon>Cyanobacteriota</taxon>
        <taxon>Cyanophyceae</taxon>
        <taxon>Synechococcales</taxon>
        <taxon>Prochlorococcaceae</taxon>
        <taxon>Parasynechococcus</taxon>
        <taxon>Parasynechococcus marenigrum</taxon>
    </lineage>
</organism>
<name>ARGC_PARMW</name>
<dbReference type="EC" id="1.2.1.38" evidence="1"/>
<dbReference type="EMBL" id="BX569692">
    <property type="protein sequence ID" value="CAE07777.1"/>
    <property type="molecule type" value="Genomic_DNA"/>
</dbReference>
<dbReference type="RefSeq" id="WP_011128126.1">
    <property type="nucleotide sequence ID" value="NC_005070.1"/>
</dbReference>
<dbReference type="SMR" id="Q7U6S4"/>
<dbReference type="STRING" id="84588.SYNW1262"/>
<dbReference type="KEGG" id="syw:SYNW1262"/>
<dbReference type="eggNOG" id="COG0002">
    <property type="taxonomic scope" value="Bacteria"/>
</dbReference>
<dbReference type="HOGENOM" id="CLU_006384_0_1_3"/>
<dbReference type="UniPathway" id="UPA00068">
    <property type="reaction ID" value="UER00108"/>
</dbReference>
<dbReference type="Proteomes" id="UP000001422">
    <property type="component" value="Chromosome"/>
</dbReference>
<dbReference type="GO" id="GO:0005737">
    <property type="term" value="C:cytoplasm"/>
    <property type="evidence" value="ECO:0007669"/>
    <property type="project" value="UniProtKB-SubCell"/>
</dbReference>
<dbReference type="GO" id="GO:0003942">
    <property type="term" value="F:N-acetyl-gamma-glutamyl-phosphate reductase activity"/>
    <property type="evidence" value="ECO:0007669"/>
    <property type="project" value="UniProtKB-UniRule"/>
</dbReference>
<dbReference type="GO" id="GO:0051287">
    <property type="term" value="F:NAD binding"/>
    <property type="evidence" value="ECO:0007669"/>
    <property type="project" value="InterPro"/>
</dbReference>
<dbReference type="GO" id="GO:0070401">
    <property type="term" value="F:NADP+ binding"/>
    <property type="evidence" value="ECO:0007669"/>
    <property type="project" value="InterPro"/>
</dbReference>
<dbReference type="GO" id="GO:0006526">
    <property type="term" value="P:L-arginine biosynthetic process"/>
    <property type="evidence" value="ECO:0007669"/>
    <property type="project" value="UniProtKB-UniRule"/>
</dbReference>
<dbReference type="CDD" id="cd23934">
    <property type="entry name" value="AGPR_1_C"/>
    <property type="match status" value="1"/>
</dbReference>
<dbReference type="CDD" id="cd17895">
    <property type="entry name" value="AGPR_1_N"/>
    <property type="match status" value="1"/>
</dbReference>
<dbReference type="FunFam" id="3.30.360.10:FF:000014">
    <property type="entry name" value="N-acetyl-gamma-glutamyl-phosphate reductase"/>
    <property type="match status" value="1"/>
</dbReference>
<dbReference type="Gene3D" id="3.30.360.10">
    <property type="entry name" value="Dihydrodipicolinate Reductase, domain 2"/>
    <property type="match status" value="1"/>
</dbReference>
<dbReference type="Gene3D" id="3.40.50.720">
    <property type="entry name" value="NAD(P)-binding Rossmann-like Domain"/>
    <property type="match status" value="1"/>
</dbReference>
<dbReference type="HAMAP" id="MF_00150">
    <property type="entry name" value="ArgC_type1"/>
    <property type="match status" value="1"/>
</dbReference>
<dbReference type="InterPro" id="IPR023013">
    <property type="entry name" value="AGPR_AS"/>
</dbReference>
<dbReference type="InterPro" id="IPR000706">
    <property type="entry name" value="AGPR_type-1"/>
</dbReference>
<dbReference type="InterPro" id="IPR036291">
    <property type="entry name" value="NAD(P)-bd_dom_sf"/>
</dbReference>
<dbReference type="InterPro" id="IPR050085">
    <property type="entry name" value="NAGSA_dehydrogenase"/>
</dbReference>
<dbReference type="InterPro" id="IPR000534">
    <property type="entry name" value="Semialdehyde_DH_NAD-bd"/>
</dbReference>
<dbReference type="NCBIfam" id="TIGR01850">
    <property type="entry name" value="argC"/>
    <property type="match status" value="1"/>
</dbReference>
<dbReference type="PANTHER" id="PTHR32338:SF10">
    <property type="entry name" value="N-ACETYL-GAMMA-GLUTAMYL-PHOSPHATE REDUCTASE, CHLOROPLASTIC-RELATED"/>
    <property type="match status" value="1"/>
</dbReference>
<dbReference type="PANTHER" id="PTHR32338">
    <property type="entry name" value="N-ACETYL-GAMMA-GLUTAMYL-PHOSPHATE REDUCTASE, CHLOROPLASTIC-RELATED-RELATED"/>
    <property type="match status" value="1"/>
</dbReference>
<dbReference type="Pfam" id="PF01118">
    <property type="entry name" value="Semialdhyde_dh"/>
    <property type="match status" value="1"/>
</dbReference>
<dbReference type="Pfam" id="PF22698">
    <property type="entry name" value="Semialdhyde_dhC_1"/>
    <property type="match status" value="1"/>
</dbReference>
<dbReference type="SMART" id="SM00859">
    <property type="entry name" value="Semialdhyde_dh"/>
    <property type="match status" value="1"/>
</dbReference>
<dbReference type="SUPFAM" id="SSF55347">
    <property type="entry name" value="Glyceraldehyde-3-phosphate dehydrogenase-like, C-terminal domain"/>
    <property type="match status" value="1"/>
</dbReference>
<dbReference type="SUPFAM" id="SSF51735">
    <property type="entry name" value="NAD(P)-binding Rossmann-fold domains"/>
    <property type="match status" value="1"/>
</dbReference>
<dbReference type="PROSITE" id="PS01224">
    <property type="entry name" value="ARGC"/>
    <property type="match status" value="1"/>
</dbReference>
<proteinExistence type="inferred from homology"/>
<accession>Q7U6S4</accession>
<keyword id="KW-0028">Amino-acid biosynthesis</keyword>
<keyword id="KW-0055">Arginine biosynthesis</keyword>
<keyword id="KW-0963">Cytoplasm</keyword>
<keyword id="KW-0521">NADP</keyword>
<keyword id="KW-0560">Oxidoreductase</keyword>